<keyword id="KW-0998">Cell outer membrane</keyword>
<keyword id="KW-0449">Lipoprotein</keyword>
<keyword id="KW-0472">Membrane</keyword>
<keyword id="KW-0564">Palmitate</keyword>
<keyword id="KW-0732">Signal</keyword>
<organism>
    <name type="scientific">Helicobacter pylori</name>
    <name type="common">Campylobacter pylori</name>
    <dbReference type="NCBI Taxonomy" id="210"/>
    <lineage>
        <taxon>Bacteria</taxon>
        <taxon>Pseudomonadati</taxon>
        <taxon>Campylobacterota</taxon>
        <taxon>Epsilonproteobacteria</taxon>
        <taxon>Campylobacterales</taxon>
        <taxon>Helicobacteraceae</taxon>
        <taxon>Helicobacter</taxon>
    </lineage>
</organism>
<reference key="1">
    <citation type="journal article" date="1997" name="J. Bacteriol.">
        <title>A flagellar sheath protein of Helicobacter pylori is identical to HpaA, a putative N-acetylneuraminyllactose-binding hemagglutinin, but is not an adhesin for AGS cells.</title>
        <authorList>
            <person name="Jones A.C."/>
            <person name="Logan R.P."/>
            <person name="Foynes S."/>
            <person name="Cockayne A."/>
            <person name="Wren B.W."/>
            <person name="Penn C.W."/>
        </authorList>
    </citation>
    <scope>NUCLEOTIDE SEQUENCE [GENOMIC DNA]</scope>
    <source>
        <strain>ATCC 43504 / NCTC 11637 / JCM 7653 / RPH 13487</strain>
    </source>
</reference>
<evidence type="ECO:0000255" key="1"/>
<evidence type="ECO:0000255" key="2">
    <source>
        <dbReference type="PROSITE-ProRule" id="PRU00303"/>
    </source>
</evidence>
<evidence type="ECO:0000305" key="3"/>
<feature type="signal peptide" evidence="2">
    <location>
        <begin position="1"/>
        <end position="27"/>
    </location>
</feature>
<feature type="chain" id="PRO_0000018103" description="Neuraminyllactose-binding hemagglutinin">
    <location>
        <begin position="28"/>
        <end position="260"/>
    </location>
</feature>
<feature type="region of interest" description="N-acetyl-neuraminyl-alpha(2,3)-lactose binding motif" evidence="1">
    <location>
        <begin position="134"/>
        <end position="139"/>
    </location>
</feature>
<feature type="lipid moiety-binding region" description="N-palmitoyl cysteine" evidence="3">
    <location>
        <position position="28"/>
    </location>
</feature>
<feature type="lipid moiety-binding region" description="S-diacylglycerol cysteine" evidence="3">
    <location>
        <position position="28"/>
    </location>
</feature>
<comment type="subcellular location">
    <subcellularLocation>
        <location evidence="3">Cell outer membrane</location>
        <topology evidence="3">Lipid-anchor</topology>
    </subcellularLocation>
</comment>
<dbReference type="EMBL" id="X92502">
    <property type="protein sequence ID" value="CAA63246.1"/>
    <property type="molecule type" value="Genomic_DNA"/>
</dbReference>
<dbReference type="RefSeq" id="WP_001202524.1">
    <property type="nucleotide sequence ID" value="NZ_JBFTEE010000002.1"/>
</dbReference>
<dbReference type="SMR" id="Q48261"/>
<dbReference type="GO" id="GO:0009279">
    <property type="term" value="C:cell outer membrane"/>
    <property type="evidence" value="ECO:0007669"/>
    <property type="project" value="UniProtKB-SubCell"/>
</dbReference>
<dbReference type="Gene3D" id="3.30.160.180">
    <property type="entry name" value="Putative neuraminyllactose-binding hemagglutinin homolog like domain"/>
    <property type="match status" value="1"/>
</dbReference>
<dbReference type="InterPro" id="IPR007876">
    <property type="entry name" value="NeuraminylLac-bd_hemagglutn"/>
</dbReference>
<dbReference type="InterPro" id="IPR038531">
    <property type="entry name" value="NeuraminylLac-bd_hemagglutn_sf"/>
</dbReference>
<dbReference type="Pfam" id="PF05211">
    <property type="entry name" value="NLBH"/>
    <property type="match status" value="1"/>
</dbReference>
<dbReference type="PIRSF" id="PIRSF019714">
    <property type="entry name" value="Neuraminyllac-bd_haemagglutn"/>
    <property type="match status" value="1"/>
</dbReference>
<dbReference type="SUPFAM" id="SSF159594">
    <property type="entry name" value="XCC0632-like"/>
    <property type="match status" value="1"/>
</dbReference>
<dbReference type="PROSITE" id="PS51257">
    <property type="entry name" value="PROKAR_LIPOPROTEIN"/>
    <property type="match status" value="1"/>
</dbReference>
<name>HPAA3_HELPX</name>
<protein>
    <recommendedName>
        <fullName>Neuraminyllactose-binding hemagglutinin</fullName>
    </recommendedName>
    <alternativeName>
        <fullName>Flagellar sheath adhesin</fullName>
    </alternativeName>
    <alternativeName>
        <fullName>N-acetylneuraminyllactose-binding fibrillar hemagglutinin receptor-binding subunit</fullName>
        <shortName>NLBH</shortName>
    </alternativeName>
</protein>
<sequence>MRANNHFKDFAWKKCLLGASVVALLVGCSPHIIETNEVALKLNYHPASEKVQALDEKILLLRPAFQYSDNIAKEYENKFKNQTALKVEQILQNQGYKVISVDSSDKDDFSFAQKKEGYLAVAMNGEIVLRPDPKRTIQKKSEPGLLFSTGLDKMEGVLIPAGFIKVTILEPMSGESLDSFTMDLSELDIQEKFLKTTHSSHSGGLVSTMVKGTDNSNDAIKSALNKIFANIMQEIDKKLTQKNLESYQKDAKELKGKRNR</sequence>
<proteinExistence type="inferred from homology"/>
<gene>
    <name type="primary">hpaA</name>
</gene>
<accession>Q48261</accession>